<evidence type="ECO:0000250" key="1">
    <source>
        <dbReference type="UniProtKB" id="A0A2L0VXR0"/>
    </source>
</evidence>
<evidence type="ECO:0000250" key="2">
    <source>
        <dbReference type="UniProtKB" id="P04798"/>
    </source>
</evidence>
<evidence type="ECO:0000255" key="3"/>
<evidence type="ECO:0000255" key="4">
    <source>
        <dbReference type="PROSITE-ProRule" id="PRU00498"/>
    </source>
</evidence>
<evidence type="ECO:0000269" key="5">
    <source>
    </source>
</evidence>
<evidence type="ECO:0000303" key="6">
    <source>
    </source>
</evidence>
<evidence type="ECO:0000305" key="7"/>
<accession>A0A6S6QI82</accession>
<name>PLE1_RHOPP</name>
<protein>
    <recommendedName>
        <fullName evidence="6">Cytochrome P450 monooxygenase ple1</fullName>
        <ecNumber evidence="5">1.-.-.-</ecNumber>
    </recommendedName>
    <alternativeName>
        <fullName evidence="6">Pleuromutilin biosynthesis cluster protein 1</fullName>
    </alternativeName>
</protein>
<keyword id="KW-0325">Glycoprotein</keyword>
<keyword id="KW-0349">Heme</keyword>
<keyword id="KW-0408">Iron</keyword>
<keyword id="KW-0472">Membrane</keyword>
<keyword id="KW-0479">Metal-binding</keyword>
<keyword id="KW-0503">Monooxygenase</keyword>
<keyword id="KW-0560">Oxidoreductase</keyword>
<keyword id="KW-0812">Transmembrane</keyword>
<keyword id="KW-1133">Transmembrane helix</keyword>
<organism>
    <name type="scientific">Rhodocybe pseudopiperita</name>
    <name type="common">Clitopilus pseudopiperitus</name>
    <dbReference type="NCBI Taxonomy" id="693819"/>
    <lineage>
        <taxon>Eukaryota</taxon>
        <taxon>Fungi</taxon>
        <taxon>Dikarya</taxon>
        <taxon>Basidiomycota</taxon>
        <taxon>Agaricomycotina</taxon>
        <taxon>Agaricomycetes</taxon>
        <taxon>Agaricomycetidae</taxon>
        <taxon>Agaricales</taxon>
        <taxon>Tricholomatineae</taxon>
        <taxon>Entolomataceae</taxon>
        <taxon>Rhodocybe</taxon>
    </lineage>
</organism>
<dbReference type="EC" id="1.-.-.-" evidence="5"/>
<dbReference type="EMBL" id="LC314149">
    <property type="protein sequence ID" value="BCI98769.1"/>
    <property type="molecule type" value="Genomic_DNA"/>
</dbReference>
<dbReference type="SMR" id="A0A6S6QI82"/>
<dbReference type="GlyCosmos" id="A0A6S6QI82">
    <property type="glycosylation" value="1 site, No reported glycans"/>
</dbReference>
<dbReference type="UniPathway" id="UPA00213"/>
<dbReference type="GO" id="GO:0016020">
    <property type="term" value="C:membrane"/>
    <property type="evidence" value="ECO:0007669"/>
    <property type="project" value="UniProtKB-SubCell"/>
</dbReference>
<dbReference type="GO" id="GO:0020037">
    <property type="term" value="F:heme binding"/>
    <property type="evidence" value="ECO:0007669"/>
    <property type="project" value="InterPro"/>
</dbReference>
<dbReference type="GO" id="GO:0005506">
    <property type="term" value="F:iron ion binding"/>
    <property type="evidence" value="ECO:0007669"/>
    <property type="project" value="InterPro"/>
</dbReference>
<dbReference type="GO" id="GO:0004497">
    <property type="term" value="F:monooxygenase activity"/>
    <property type="evidence" value="ECO:0007669"/>
    <property type="project" value="UniProtKB-KW"/>
</dbReference>
<dbReference type="GO" id="GO:0016705">
    <property type="term" value="F:oxidoreductase activity, acting on paired donors, with incorporation or reduction of molecular oxygen"/>
    <property type="evidence" value="ECO:0007669"/>
    <property type="project" value="InterPro"/>
</dbReference>
<dbReference type="GO" id="GO:0016114">
    <property type="term" value="P:terpenoid biosynthetic process"/>
    <property type="evidence" value="ECO:0007669"/>
    <property type="project" value="UniProtKB-UniPathway"/>
</dbReference>
<dbReference type="CDD" id="cd11065">
    <property type="entry name" value="CYP64-like"/>
    <property type="match status" value="1"/>
</dbReference>
<dbReference type="Gene3D" id="1.10.630.10">
    <property type="entry name" value="Cytochrome P450"/>
    <property type="match status" value="1"/>
</dbReference>
<dbReference type="InterPro" id="IPR001128">
    <property type="entry name" value="Cyt_P450"/>
</dbReference>
<dbReference type="InterPro" id="IPR017972">
    <property type="entry name" value="Cyt_P450_CS"/>
</dbReference>
<dbReference type="InterPro" id="IPR002401">
    <property type="entry name" value="Cyt_P450_E_grp-I"/>
</dbReference>
<dbReference type="InterPro" id="IPR036396">
    <property type="entry name" value="Cyt_P450_sf"/>
</dbReference>
<dbReference type="InterPro" id="IPR050364">
    <property type="entry name" value="Cytochrome_P450_fung"/>
</dbReference>
<dbReference type="PANTHER" id="PTHR46300:SF7">
    <property type="entry name" value="P450, PUTATIVE (EUROFUNG)-RELATED"/>
    <property type="match status" value="1"/>
</dbReference>
<dbReference type="PANTHER" id="PTHR46300">
    <property type="entry name" value="P450, PUTATIVE (EUROFUNG)-RELATED-RELATED"/>
    <property type="match status" value="1"/>
</dbReference>
<dbReference type="Pfam" id="PF00067">
    <property type="entry name" value="p450"/>
    <property type="match status" value="1"/>
</dbReference>
<dbReference type="PRINTS" id="PR00463">
    <property type="entry name" value="EP450I"/>
</dbReference>
<dbReference type="PRINTS" id="PR00385">
    <property type="entry name" value="P450"/>
</dbReference>
<dbReference type="SUPFAM" id="SSF48264">
    <property type="entry name" value="Cytochrome P450"/>
    <property type="match status" value="1"/>
</dbReference>
<dbReference type="PROSITE" id="PS00086">
    <property type="entry name" value="CYTOCHROME_P450"/>
    <property type="match status" value="1"/>
</dbReference>
<comment type="function">
    <text evidence="1 5">Cytochrome P450 monooxygenase; part of the gene cluster that mediates the biosynthesis of pleuromutilin, a tricyclic diterpene showing antibacterial properties (PubMed:28924980). The geranylgeranyl diphosphate (GGPP) synthase ple4 catalyzes the first step in pleuromutilin biosynthesis (PubMed:28924980). GGPP is then substrate of the premutilin synthase (PS) ple3 to yield premutilin (PubMed:28924980). Premutilin synthase is a bifunctional enzyme composed of the fusion of a class II diterpene cyclase (DTC) and a class I diterpene synthase (DTS), with the corresponding domains and active sites containing characteristic aspartate-rich motifs (By similarity). GGPP is first converted to mutildienyl-diphosphate (MPP) at the class II DTC site (By similarity). MPP is subsequently further cyclized at the class I DTS site, followed by a 1,5-hydride shift and addition of water prior to terminating deprotonation, to yield premutilin (By similarity). The cytochrome P450 monooxygenases ple5 and ple6 hydroxylate premutilin at C-11 and C-3, respectively, producing 11-hydroxypremutilin and 3-hydroxypremutilin (PubMed:28924980). The combination of the actions of both ple5 and ple6 leads to the production of 3,11-dihydroxypremutilin (PubMed:28924980). The short chain dehydrogenase ple7 further converts 3,11-dihydroxypremutilin into mutilin (PubMed:28924980). The acetyltransferase ple2 then acetylates mutilin to produce 14-O-acetylmutilin (PubMed:28924980). Finally, the cytochrome P450 monooxygenase ple1 catalyzes hydroxylation on the alpha position of the acetyl side chain of 14-O-acetylmutilin to yield pleuromutilin (PubMed:28924980).</text>
</comment>
<comment type="cofactor">
    <cofactor evidence="2">
        <name>heme</name>
        <dbReference type="ChEBI" id="CHEBI:30413"/>
    </cofactor>
</comment>
<comment type="pathway">
    <text evidence="5">Secondary metabolite biosynthesis; terpenoid biosynthesis.</text>
</comment>
<comment type="subcellular location">
    <subcellularLocation>
        <location evidence="3">Membrane</location>
        <topology evidence="3">Single-pass membrane protein</topology>
    </subcellularLocation>
</comment>
<comment type="similarity">
    <text evidence="7">Belongs to the cytochrome P450 family.</text>
</comment>
<sequence length="523" mass="59035">MAPSNTERALPVLAIWAAIGLAYWIDSQKKKKHHLPPGPKKLPIIGNVMDLPAKIEWETYARWGKEYNSDIIQVSAVGTSIVILNSANAANDLLLKRSAIYSSRPHSTMHHELSGWGFTWALMPYGESWRAGRRSFTKHFNSSNPGINQPRELRYVKRFLKQLYEKPNDVLDHVRNLVGSTTLSMTYGLETEPYNDPYVELVEKAVLAASEIMTSGAFLVDIIPAMKHIPPWVPGTIFHQKAALMRGHAYYVREQPFKVAQEMIKTGDYEPSFVSDALRDLENSETPEEDLEHLKDVAGQVYIAGADTTASALGTFFLAMVCFPEVQKKAQQELDSVLNGRLPEHADFPSFPYLNAVIKEVYRWRPVTPMGVPHQTIADDVYRDYHIPKGSIVFANQWAMSNDENDYPQPGEFRPERYLTEDGKPNKAVRDPFDIAFGFGRRICAGRYLAHSTITLAAASVLSLFDLLKAVDENGKEIEPTREYHQAMISRPLEFPCRIKPRNKEAEEVIRACPLTFTKPTSA</sequence>
<proteinExistence type="evidence at protein level"/>
<gene>
    <name evidence="6" type="primary">ple1</name>
</gene>
<reference key="1">
    <citation type="journal article" date="2017" name="ChemBioChem">
        <title>Biosynthetic machinery of diterpene pleuromutilin isolated from basidiomycete fungi.</title>
        <authorList>
            <person name="Yamane M."/>
            <person name="Minami A."/>
            <person name="Liu C."/>
            <person name="Ozaki T."/>
            <person name="Takeuchi I."/>
            <person name="Tsukagoshi T."/>
            <person name="Tokiwano T."/>
            <person name="Gomi K."/>
            <person name="Oikawa H."/>
        </authorList>
    </citation>
    <scope>NUCLEOTIDE SEQUENCE [GENOMIC DNA]</scope>
    <scope>FUNCTION</scope>
    <scope>CATALYTIC ACTIVITY</scope>
    <scope>PATHWAY</scope>
    <source>
        <strain>ATCC 20527</strain>
    </source>
</reference>
<feature type="chain" id="PRO_0000453725" description="Cytochrome P450 monooxygenase ple1">
    <location>
        <begin position="1"/>
        <end position="523"/>
    </location>
</feature>
<feature type="transmembrane region" description="Helical" evidence="3">
    <location>
        <begin position="9"/>
        <end position="29"/>
    </location>
</feature>
<feature type="binding site" description="axial binding residue" evidence="2">
    <location>
        <position position="444"/>
    </location>
    <ligand>
        <name>heme</name>
        <dbReference type="ChEBI" id="CHEBI:30413"/>
    </ligand>
    <ligandPart>
        <name>Fe</name>
        <dbReference type="ChEBI" id="CHEBI:18248"/>
    </ligandPart>
</feature>
<feature type="glycosylation site" description="N-linked (GlcNAc...) asparagine" evidence="4">
    <location>
        <position position="141"/>
    </location>
</feature>